<organism>
    <name type="scientific">Escherichia coli (strain K12)</name>
    <dbReference type="NCBI Taxonomy" id="83333"/>
    <lineage>
        <taxon>Bacteria</taxon>
        <taxon>Pseudomonadati</taxon>
        <taxon>Pseudomonadota</taxon>
        <taxon>Gammaproteobacteria</taxon>
        <taxon>Enterobacterales</taxon>
        <taxon>Enterobacteriaceae</taxon>
        <taxon>Escherichia</taxon>
    </lineage>
</organism>
<proteinExistence type="evidence at protein level"/>
<gene>
    <name type="primary">glmM</name>
    <name type="synonym">mrsA</name>
    <name type="synonym">yhbF</name>
    <name type="ordered locus">b3176</name>
    <name type="ordered locus">JW3143</name>
</gene>
<keyword id="KW-0903">Direct protein sequencing</keyword>
<keyword id="KW-0413">Isomerase</keyword>
<keyword id="KW-0460">Magnesium</keyword>
<keyword id="KW-0479">Metal-binding</keyword>
<keyword id="KW-0597">Phosphoprotein</keyword>
<keyword id="KW-1185">Reference proteome</keyword>
<reference key="1">
    <citation type="journal article" date="1993" name="J. Bacteriol.">
        <title>The dihydropteroate synthase gene, folP, is near the leucine tRNA gene, leuU, on the Escherichia coli chromosome.</title>
        <authorList>
            <person name="Dallas W.S."/>
            <person name="Dev I.K."/>
            <person name="Ray P.H."/>
        </authorList>
    </citation>
    <scope>NUCLEOTIDE SEQUENCE [GENOMIC DNA]</scope>
    <source>
        <strain>K12 / W3110 / ATCC 27325 / DSM 5911</strain>
    </source>
</reference>
<reference key="2">
    <citation type="submission" date="1993-09" db="EMBL/GenBank/DDBJ databases">
        <authorList>
            <person name="Wang R."/>
            <person name="Kushner S.R."/>
        </authorList>
    </citation>
    <scope>NUCLEOTIDE SEQUENCE [GENOMIC DNA]</scope>
    <source>
        <strain>K12</strain>
    </source>
</reference>
<reference key="3">
    <citation type="journal article" date="1997" name="Science">
        <title>The complete genome sequence of Escherichia coli K-12.</title>
        <authorList>
            <person name="Blattner F.R."/>
            <person name="Plunkett G. III"/>
            <person name="Bloch C.A."/>
            <person name="Perna N.T."/>
            <person name="Burland V."/>
            <person name="Riley M."/>
            <person name="Collado-Vides J."/>
            <person name="Glasner J.D."/>
            <person name="Rode C.K."/>
            <person name="Mayhew G.F."/>
            <person name="Gregor J."/>
            <person name="Davis N.W."/>
            <person name="Kirkpatrick H.A."/>
            <person name="Goeden M.A."/>
            <person name="Rose D.J."/>
            <person name="Mau B."/>
            <person name="Shao Y."/>
        </authorList>
    </citation>
    <scope>NUCLEOTIDE SEQUENCE [LARGE SCALE GENOMIC DNA]</scope>
    <source>
        <strain>K12 / MG1655 / ATCC 47076</strain>
    </source>
</reference>
<reference key="4">
    <citation type="journal article" date="2006" name="Mol. Syst. Biol.">
        <title>Highly accurate genome sequences of Escherichia coli K-12 strains MG1655 and W3110.</title>
        <authorList>
            <person name="Hayashi K."/>
            <person name="Morooka N."/>
            <person name="Yamamoto Y."/>
            <person name="Fujita K."/>
            <person name="Isono K."/>
            <person name="Choi S."/>
            <person name="Ohtsubo E."/>
            <person name="Baba T."/>
            <person name="Wanner B.L."/>
            <person name="Mori H."/>
            <person name="Horiuchi T."/>
        </authorList>
    </citation>
    <scope>NUCLEOTIDE SEQUENCE [LARGE SCALE GENOMIC DNA]</scope>
    <source>
        <strain>K12 / W3110 / ATCC 27325 / DSM 5911</strain>
    </source>
</reference>
<reference key="5">
    <citation type="journal article" date="1996" name="J. Biol. Chem.">
        <title>Characterization of the essential gene glmM encoding phosphoglucosamine mutase in Escherichia coli.</title>
        <authorList>
            <person name="Mengin-Lecreulx D."/>
            <person name="van Heijenoort J."/>
        </authorList>
    </citation>
    <scope>PROTEIN SEQUENCE OF 2-12</scope>
    <scope>CHARACTERIZATION</scope>
</reference>
<reference key="6">
    <citation type="journal article" date="1999" name="Eur. J. Biochem.">
        <title>Reaction mechanism of phosphoglucosamine mutase from Escherichia coli.</title>
        <authorList>
            <person name="Jolly L."/>
            <person name="Ferrari P."/>
            <person name="Blanot D."/>
            <person name="Van Heijenoort J."/>
            <person name="Fassy F."/>
            <person name="Mengin-Lecreulx D."/>
        </authorList>
    </citation>
    <scope>PHOSPHORYLATION AT SER-102</scope>
    <scope>FUNCTION</scope>
    <scope>CATALYTIC ACTIVITY</scope>
    <scope>SUBSTRATE SPECIFICITY</scope>
    <scope>BIOPHYSICOCHEMICAL PROPERTIES</scope>
    <scope>REACTION MECHANISM</scope>
    <scope>IDENTIFICATION BY MASS SPECTROMETRY</scope>
    <scope>MUTAGENESIS OF SER-100 AND SER-102</scope>
</reference>
<reference key="7">
    <citation type="journal article" date="2000" name="J. Bacteriol.">
        <title>Autophosphorylation of phosphoglucosamine mutase from Escherichia coli.</title>
        <authorList>
            <person name="Jolly L."/>
            <person name="Pompeo F."/>
            <person name="van Heijenoort J."/>
            <person name="Fassy F."/>
            <person name="Mengin-Lecreulx D."/>
        </authorList>
    </citation>
    <scope>PHOSPHORYLATION AT SER-102</scope>
    <scope>KINETIC PARAMETERS</scope>
    <scope>ACTIVITY REGULATION</scope>
    <scope>ACTIVE SITE</scope>
</reference>
<name>GLMM_ECOLI</name>
<comment type="function">
    <text evidence="2">Catalyzes the conversion of glucosamine-6-phosphate to glucosamine-1-phosphate. Can also catalyze the formation of glucose-6-P from glucose-1-P, although at a 1400-fold lower rate.</text>
</comment>
<comment type="catalytic activity">
    <reaction evidence="2">
        <text>alpha-D-glucosamine 1-phosphate = D-glucosamine 6-phosphate</text>
        <dbReference type="Rhea" id="RHEA:23424"/>
        <dbReference type="ChEBI" id="CHEBI:58516"/>
        <dbReference type="ChEBI" id="CHEBI:58725"/>
        <dbReference type="EC" id="5.4.2.10"/>
    </reaction>
    <physiologicalReaction direction="left-to-right" evidence="2">
        <dbReference type="Rhea" id="RHEA:23425"/>
    </physiologicalReaction>
    <physiologicalReaction direction="right-to-left" evidence="2">
        <dbReference type="Rhea" id="RHEA:23426"/>
    </physiologicalReaction>
</comment>
<comment type="cofactor">
    <cofactor evidence="1">
        <name>Mg(2+)</name>
        <dbReference type="ChEBI" id="CHEBI:18420"/>
    </cofactor>
    <text evidence="1">Binds 1 Mg(2+) ion per subunit.</text>
</comment>
<comment type="activity regulation">
    <text evidence="3">Autophosphorylation is inhibited by inorganic phosphate or EDTA.</text>
</comment>
<comment type="biophysicochemical properties">
    <kinetics>
        <KM evidence="2 3">0.05 mM for glucosamine-6-P</KM>
        <KM evidence="2 3">0.08 mM for glucosamine-1,6-diP</KM>
        <KM evidence="2 3">0.5 mM for glucose-1,6-diP</KM>
        <KM evidence="2 3">0.65 mM for glucose-1-P</KM>
        <KM evidence="2 3">0.06 mM for ATP</KM>
    </kinetics>
</comment>
<comment type="PTM">
    <text evidence="2 3">Activated by phosphorylation. Can autophosphorylate in vitro using ATP, alpha-D-glucosamine 1,6-bisphosphate or alpha-D-glucose 1,6-bisphosphate.</text>
</comment>
<comment type="miscellaneous">
    <text>Catalysis proceeds by a classical ping-pong bi-bi reaction mechanism, with alpha-D-glucosamine 1,6-bisphosphate as an intermediate.</text>
</comment>
<comment type="similarity">
    <text evidence="5">Belongs to the phosphohexose mutase family.</text>
</comment>
<protein>
    <recommendedName>
        <fullName>Phosphoglucosamine mutase</fullName>
        <ecNumber evidence="2">5.4.2.10</ecNumber>
    </recommendedName>
</protein>
<feature type="initiator methionine" description="Removed" evidence="4">
    <location>
        <position position="1"/>
    </location>
</feature>
<feature type="chain" id="PRO_0000147887" description="Phosphoglucosamine mutase">
    <location>
        <begin position="2"/>
        <end position="445"/>
    </location>
</feature>
<feature type="active site" description="Phosphoserine intermediate" evidence="3">
    <location>
        <position position="102"/>
    </location>
</feature>
<feature type="binding site" description="via phosphate group" evidence="1">
    <location>
        <position position="102"/>
    </location>
    <ligand>
        <name>Mg(2+)</name>
        <dbReference type="ChEBI" id="CHEBI:18420"/>
    </ligand>
</feature>
<feature type="binding site" evidence="1">
    <location>
        <position position="241"/>
    </location>
    <ligand>
        <name>Mg(2+)</name>
        <dbReference type="ChEBI" id="CHEBI:18420"/>
    </ligand>
</feature>
<feature type="binding site" evidence="1">
    <location>
        <position position="243"/>
    </location>
    <ligand>
        <name>Mg(2+)</name>
        <dbReference type="ChEBI" id="CHEBI:18420"/>
    </ligand>
</feature>
<feature type="binding site" evidence="1">
    <location>
        <position position="245"/>
    </location>
    <ligand>
        <name>Mg(2+)</name>
        <dbReference type="ChEBI" id="CHEBI:18420"/>
    </ligand>
</feature>
<feature type="modified residue" description="Phosphoserine; by autocatalysis" evidence="2 3">
    <location>
        <position position="102"/>
    </location>
</feature>
<feature type="mutagenesis site" description="2% of wild-type activity." evidence="2">
    <original>S</original>
    <variation>A</variation>
    <location>
        <position position="100"/>
    </location>
</feature>
<feature type="mutagenesis site" description="20-fold increase in the non-specific phosphoglucomutase activity towards glucose-phosphate substrates (non aminated)." evidence="2">
    <original>S</original>
    <variation>T</variation>
    <location>
        <position position="100"/>
    </location>
</feature>
<feature type="mutagenesis site" description="Loss of activity in the absence or presence of glucosamine-1,6-diP." evidence="2">
    <original>S</original>
    <variation>A</variation>
    <location>
        <position position="102"/>
    </location>
</feature>
<feature type="sequence conflict" description="In Ref. 2; AAA97510." evidence="5" ref="2">
    <original>A</original>
    <variation>R</variation>
    <location>
        <position position="69"/>
    </location>
</feature>
<feature type="sequence conflict" description="In Ref. 2; AAA97510." evidence="5" ref="2">
    <original>C</original>
    <variation>S</variation>
    <location>
        <position position="162"/>
    </location>
</feature>
<feature type="sequence conflict" description="In Ref. 2; AAA97510." evidence="5" ref="2">
    <original>P</original>
    <variation>R</variation>
    <location>
        <position position="167"/>
    </location>
</feature>
<feature type="sequence conflict" description="In Ref. 2; AAA97510." evidence="5" ref="2">
    <original>VVDC</original>
    <variation>LVIG</variation>
    <location>
        <begin position="178"/>
        <end position="181"/>
    </location>
</feature>
<feature type="sequence conflict" description="In Ref. 2; AAA97510." evidence="5" ref="2">
    <original>R</original>
    <variation>C</variation>
    <location>
        <position position="411"/>
    </location>
</feature>
<feature type="sequence conflict" description="In Ref. 2; AAA97510." evidence="5" ref="2">
    <original>P</original>
    <variation>R</variation>
    <location>
        <position position="417"/>
    </location>
</feature>
<sequence>MSNRKYFGTDGIRGRVGDAPITPDFVLKLGWAAGKVLARHGSRKIIIGKDTRISGYMLESALEAGLAAAGLSALFTGPMPTPAVAYLTRTFRAEAGIVISASHNPFYDNGIKFFSIDGTKLPDAVEEAIEAEMEKEISCVDSAELGKASRIVDAAGRYIEFCKATFPNELSLSELKIVVDCANGATYHIAPNVLRELGANVIAIGCEPNGVNINAEVGATDVRALQARVLAEKADLGIAFDGDGDRVIMVDHEGNKVDGDQIMYIIAREGLRQGQLRGGAVGTLMSNMGLELALKQLGIPFARAKVGDRYVLEKMQEKGWRIGAENSGHVILLDKTTTGDGIVAGLQVLAAMARNHMSLHDLCSGMKMFPQILVNVRYTAGSGDPLEHESVKAVTAEVEAALGNRGRVLLRKSGTEPLIRVMVEGEDEAQVTEFAHRIADAVKAV</sequence>
<dbReference type="EC" id="5.4.2.10" evidence="2"/>
<dbReference type="EMBL" id="L12968">
    <property type="protein sequence ID" value="AAA16122.1"/>
    <property type="molecule type" value="Unassigned_DNA"/>
</dbReference>
<dbReference type="EMBL" id="U01376">
    <property type="protein sequence ID" value="AAA97510.1"/>
    <property type="molecule type" value="Genomic_DNA"/>
</dbReference>
<dbReference type="EMBL" id="U18997">
    <property type="protein sequence ID" value="AAA57977.1"/>
    <property type="molecule type" value="Genomic_DNA"/>
</dbReference>
<dbReference type="EMBL" id="U00096">
    <property type="protein sequence ID" value="AAC76208.1"/>
    <property type="molecule type" value="Genomic_DNA"/>
</dbReference>
<dbReference type="EMBL" id="AP009048">
    <property type="protein sequence ID" value="BAE77220.1"/>
    <property type="molecule type" value="Genomic_DNA"/>
</dbReference>
<dbReference type="PIR" id="I41215">
    <property type="entry name" value="I41215"/>
</dbReference>
<dbReference type="RefSeq" id="NP_417643.1">
    <property type="nucleotide sequence ID" value="NC_000913.3"/>
</dbReference>
<dbReference type="RefSeq" id="WP_000071134.1">
    <property type="nucleotide sequence ID" value="NZ_STEB01000012.1"/>
</dbReference>
<dbReference type="SMR" id="P31120"/>
<dbReference type="BioGRID" id="4263256">
    <property type="interactions" value="229"/>
</dbReference>
<dbReference type="DIP" id="DIP-10260N"/>
<dbReference type="FunCoup" id="P31120">
    <property type="interactions" value="581"/>
</dbReference>
<dbReference type="IntAct" id="P31120">
    <property type="interactions" value="16"/>
</dbReference>
<dbReference type="STRING" id="511145.b3176"/>
<dbReference type="iPTMnet" id="P31120"/>
<dbReference type="jPOST" id="P31120"/>
<dbReference type="PaxDb" id="511145-b3176"/>
<dbReference type="EnsemblBacteria" id="AAC76208">
    <property type="protein sequence ID" value="AAC76208"/>
    <property type="gene ID" value="b3176"/>
</dbReference>
<dbReference type="GeneID" id="75206032"/>
<dbReference type="GeneID" id="947692"/>
<dbReference type="KEGG" id="ecj:JW3143"/>
<dbReference type="KEGG" id="eco:b3176"/>
<dbReference type="KEGG" id="ecoc:C3026_17295"/>
<dbReference type="PATRIC" id="fig|1411691.4.peg.3556"/>
<dbReference type="EchoBASE" id="EB1514"/>
<dbReference type="eggNOG" id="COG1109">
    <property type="taxonomic scope" value="Bacteria"/>
</dbReference>
<dbReference type="HOGENOM" id="CLU_016950_7_0_6"/>
<dbReference type="InParanoid" id="P31120"/>
<dbReference type="OMA" id="SHNAMPD"/>
<dbReference type="OrthoDB" id="9803322at2"/>
<dbReference type="PhylomeDB" id="P31120"/>
<dbReference type="BioCyc" id="EcoCyc:PHOSGLUCOSAMINEMUT-MONOMER"/>
<dbReference type="BioCyc" id="MetaCyc:PHOSGLUCOSAMINEMUT-MONOMER"/>
<dbReference type="SABIO-RK" id="P31120"/>
<dbReference type="PRO" id="PR:P31120"/>
<dbReference type="Proteomes" id="UP000000625">
    <property type="component" value="Chromosome"/>
</dbReference>
<dbReference type="GO" id="GO:0005829">
    <property type="term" value="C:cytosol"/>
    <property type="evidence" value="ECO:0000314"/>
    <property type="project" value="EcoCyc"/>
</dbReference>
<dbReference type="GO" id="GO:0042802">
    <property type="term" value="F:identical protein binding"/>
    <property type="evidence" value="ECO:0000314"/>
    <property type="project" value="EcoCyc"/>
</dbReference>
<dbReference type="GO" id="GO:0000287">
    <property type="term" value="F:magnesium ion binding"/>
    <property type="evidence" value="ECO:0007669"/>
    <property type="project" value="UniProtKB-UniRule"/>
</dbReference>
<dbReference type="GO" id="GO:0008966">
    <property type="term" value="F:phosphoglucosamine mutase activity"/>
    <property type="evidence" value="ECO:0000314"/>
    <property type="project" value="EcoCyc"/>
</dbReference>
<dbReference type="GO" id="GO:0004615">
    <property type="term" value="F:phosphomannomutase activity"/>
    <property type="evidence" value="ECO:0000318"/>
    <property type="project" value="GO_Central"/>
</dbReference>
<dbReference type="GO" id="GO:0005975">
    <property type="term" value="P:carbohydrate metabolic process"/>
    <property type="evidence" value="ECO:0007669"/>
    <property type="project" value="InterPro"/>
</dbReference>
<dbReference type="GO" id="GO:0009252">
    <property type="term" value="P:peptidoglycan biosynthetic process"/>
    <property type="evidence" value="ECO:0000315"/>
    <property type="project" value="EcoCyc"/>
</dbReference>
<dbReference type="GO" id="GO:0006048">
    <property type="term" value="P:UDP-N-acetylglucosamine biosynthetic process"/>
    <property type="evidence" value="ECO:0000315"/>
    <property type="project" value="EcoCyc"/>
</dbReference>
<dbReference type="CDD" id="cd05802">
    <property type="entry name" value="GlmM"/>
    <property type="match status" value="1"/>
</dbReference>
<dbReference type="FunFam" id="3.30.310.50:FF:000001">
    <property type="entry name" value="Phosphoglucosamine mutase"/>
    <property type="match status" value="1"/>
</dbReference>
<dbReference type="FunFam" id="3.40.120.10:FF:000001">
    <property type="entry name" value="Phosphoglucosamine mutase"/>
    <property type="match status" value="1"/>
</dbReference>
<dbReference type="FunFam" id="3.40.120.10:FF:000002">
    <property type="entry name" value="Phosphoglucosamine mutase"/>
    <property type="match status" value="1"/>
</dbReference>
<dbReference type="Gene3D" id="3.40.120.10">
    <property type="entry name" value="Alpha-D-Glucose-1,6-Bisphosphate, subunit A, domain 3"/>
    <property type="match status" value="3"/>
</dbReference>
<dbReference type="Gene3D" id="3.30.310.50">
    <property type="entry name" value="Alpha-D-phosphohexomutase, C-terminal domain"/>
    <property type="match status" value="1"/>
</dbReference>
<dbReference type="HAMAP" id="MF_01554_B">
    <property type="entry name" value="GlmM_B"/>
    <property type="match status" value="1"/>
</dbReference>
<dbReference type="InterPro" id="IPR005844">
    <property type="entry name" value="A-D-PHexomutase_a/b/a-I"/>
</dbReference>
<dbReference type="InterPro" id="IPR016055">
    <property type="entry name" value="A-D-PHexomutase_a/b/a-I/II/III"/>
</dbReference>
<dbReference type="InterPro" id="IPR005845">
    <property type="entry name" value="A-D-PHexomutase_a/b/a-II"/>
</dbReference>
<dbReference type="InterPro" id="IPR005846">
    <property type="entry name" value="A-D-PHexomutase_a/b/a-III"/>
</dbReference>
<dbReference type="InterPro" id="IPR005843">
    <property type="entry name" value="A-D-PHexomutase_C"/>
</dbReference>
<dbReference type="InterPro" id="IPR036900">
    <property type="entry name" value="A-D-PHexomutase_C_sf"/>
</dbReference>
<dbReference type="InterPro" id="IPR016066">
    <property type="entry name" value="A-D-PHexomutase_CS"/>
</dbReference>
<dbReference type="InterPro" id="IPR005841">
    <property type="entry name" value="Alpha-D-phosphohexomutase_SF"/>
</dbReference>
<dbReference type="InterPro" id="IPR006352">
    <property type="entry name" value="GlmM_bact"/>
</dbReference>
<dbReference type="InterPro" id="IPR050060">
    <property type="entry name" value="Phosphoglucosamine_mutase"/>
</dbReference>
<dbReference type="NCBIfam" id="TIGR01455">
    <property type="entry name" value="glmM"/>
    <property type="match status" value="1"/>
</dbReference>
<dbReference type="NCBIfam" id="NF008139">
    <property type="entry name" value="PRK10887.1"/>
    <property type="match status" value="1"/>
</dbReference>
<dbReference type="PANTHER" id="PTHR42946:SF1">
    <property type="entry name" value="PHOSPHOGLUCOMUTASE (ALPHA-D-GLUCOSE-1,6-BISPHOSPHATE-DEPENDENT)"/>
    <property type="match status" value="1"/>
</dbReference>
<dbReference type="PANTHER" id="PTHR42946">
    <property type="entry name" value="PHOSPHOHEXOSE MUTASE"/>
    <property type="match status" value="1"/>
</dbReference>
<dbReference type="Pfam" id="PF02878">
    <property type="entry name" value="PGM_PMM_I"/>
    <property type="match status" value="1"/>
</dbReference>
<dbReference type="Pfam" id="PF02879">
    <property type="entry name" value="PGM_PMM_II"/>
    <property type="match status" value="1"/>
</dbReference>
<dbReference type="Pfam" id="PF02880">
    <property type="entry name" value="PGM_PMM_III"/>
    <property type="match status" value="1"/>
</dbReference>
<dbReference type="Pfam" id="PF00408">
    <property type="entry name" value="PGM_PMM_IV"/>
    <property type="match status" value="1"/>
</dbReference>
<dbReference type="PRINTS" id="PR00509">
    <property type="entry name" value="PGMPMM"/>
</dbReference>
<dbReference type="SUPFAM" id="SSF55957">
    <property type="entry name" value="Phosphoglucomutase, C-terminal domain"/>
    <property type="match status" value="1"/>
</dbReference>
<dbReference type="SUPFAM" id="SSF53738">
    <property type="entry name" value="Phosphoglucomutase, first 3 domains"/>
    <property type="match status" value="3"/>
</dbReference>
<dbReference type="PROSITE" id="PS00710">
    <property type="entry name" value="PGM_PMM"/>
    <property type="match status" value="1"/>
</dbReference>
<evidence type="ECO:0000250" key="1"/>
<evidence type="ECO:0000269" key="2">
    <source>
    </source>
</evidence>
<evidence type="ECO:0000269" key="3">
    <source>
    </source>
</evidence>
<evidence type="ECO:0000269" key="4">
    <source>
    </source>
</evidence>
<evidence type="ECO:0000305" key="5"/>
<accession>P31120</accession>
<accession>Q2M936</accession>